<sequence length="277" mass="31067">MIRVPSPAKLNLFLHITGRRENGYHELQTIFQLIDLYDWMTFTPISEDEIQIEGLGEVQLEQNLIYRAAQILRPHAQNPCGLHIKIEKNIPMGAGLGGGSSNAATTLIVLNQLWQCGLTEEQLAQFGVKLGADVPIFIYGLNAWAEGIGEHLSFIDLDQKQFIVLKPDCFISTQLLFSQKTLTRDSKPTTFCAYQLEPSNFGNNFEPLARELYPEVEEAMQYLDQFGHAKLTGTGACVFAEVTDEMNVDDILKHAPCKAYLVHSLKESPLRHFKVAS</sequence>
<dbReference type="EC" id="2.7.1.148" evidence="1"/>
<dbReference type="EMBL" id="CP001182">
    <property type="protein sequence ID" value="ACJ40677.1"/>
    <property type="molecule type" value="Genomic_DNA"/>
</dbReference>
<dbReference type="RefSeq" id="WP_000621866.1">
    <property type="nucleotide sequence ID" value="NC_011586.2"/>
</dbReference>
<dbReference type="SMR" id="B7I7P3"/>
<dbReference type="GeneID" id="92892765"/>
<dbReference type="KEGG" id="abn:AB57_0883"/>
<dbReference type="HOGENOM" id="CLU_053057_3_0_6"/>
<dbReference type="UniPathway" id="UPA00056">
    <property type="reaction ID" value="UER00094"/>
</dbReference>
<dbReference type="Proteomes" id="UP000007094">
    <property type="component" value="Chromosome"/>
</dbReference>
<dbReference type="GO" id="GO:0050515">
    <property type="term" value="F:4-(cytidine 5'-diphospho)-2-C-methyl-D-erythritol kinase activity"/>
    <property type="evidence" value="ECO:0007669"/>
    <property type="project" value="UniProtKB-UniRule"/>
</dbReference>
<dbReference type="GO" id="GO:0005524">
    <property type="term" value="F:ATP binding"/>
    <property type="evidence" value="ECO:0007669"/>
    <property type="project" value="UniProtKB-UniRule"/>
</dbReference>
<dbReference type="GO" id="GO:0019288">
    <property type="term" value="P:isopentenyl diphosphate biosynthetic process, methylerythritol 4-phosphate pathway"/>
    <property type="evidence" value="ECO:0007669"/>
    <property type="project" value="UniProtKB-UniRule"/>
</dbReference>
<dbReference type="GO" id="GO:0016114">
    <property type="term" value="P:terpenoid biosynthetic process"/>
    <property type="evidence" value="ECO:0007669"/>
    <property type="project" value="InterPro"/>
</dbReference>
<dbReference type="Gene3D" id="3.30.230.10">
    <property type="match status" value="1"/>
</dbReference>
<dbReference type="Gene3D" id="3.30.70.890">
    <property type="entry name" value="GHMP kinase, C-terminal domain"/>
    <property type="match status" value="1"/>
</dbReference>
<dbReference type="HAMAP" id="MF_00061">
    <property type="entry name" value="IspE"/>
    <property type="match status" value="1"/>
</dbReference>
<dbReference type="InterPro" id="IPR013750">
    <property type="entry name" value="GHMP_kinase_C_dom"/>
</dbReference>
<dbReference type="InterPro" id="IPR036554">
    <property type="entry name" value="GHMP_kinase_C_sf"/>
</dbReference>
<dbReference type="InterPro" id="IPR006204">
    <property type="entry name" value="GHMP_kinase_N_dom"/>
</dbReference>
<dbReference type="InterPro" id="IPR004424">
    <property type="entry name" value="IspE"/>
</dbReference>
<dbReference type="InterPro" id="IPR020568">
    <property type="entry name" value="Ribosomal_Su5_D2-typ_SF"/>
</dbReference>
<dbReference type="InterPro" id="IPR014721">
    <property type="entry name" value="Ribsml_uS5_D2-typ_fold_subgr"/>
</dbReference>
<dbReference type="NCBIfam" id="TIGR00154">
    <property type="entry name" value="ispE"/>
    <property type="match status" value="1"/>
</dbReference>
<dbReference type="PANTHER" id="PTHR43527">
    <property type="entry name" value="4-DIPHOSPHOCYTIDYL-2-C-METHYL-D-ERYTHRITOL KINASE, CHLOROPLASTIC"/>
    <property type="match status" value="1"/>
</dbReference>
<dbReference type="PANTHER" id="PTHR43527:SF2">
    <property type="entry name" value="4-DIPHOSPHOCYTIDYL-2-C-METHYL-D-ERYTHRITOL KINASE, CHLOROPLASTIC"/>
    <property type="match status" value="1"/>
</dbReference>
<dbReference type="Pfam" id="PF08544">
    <property type="entry name" value="GHMP_kinases_C"/>
    <property type="match status" value="1"/>
</dbReference>
<dbReference type="Pfam" id="PF00288">
    <property type="entry name" value="GHMP_kinases_N"/>
    <property type="match status" value="1"/>
</dbReference>
<dbReference type="PIRSF" id="PIRSF010376">
    <property type="entry name" value="IspE"/>
    <property type="match status" value="1"/>
</dbReference>
<dbReference type="SUPFAM" id="SSF55060">
    <property type="entry name" value="GHMP Kinase, C-terminal domain"/>
    <property type="match status" value="1"/>
</dbReference>
<dbReference type="SUPFAM" id="SSF54211">
    <property type="entry name" value="Ribosomal protein S5 domain 2-like"/>
    <property type="match status" value="1"/>
</dbReference>
<gene>
    <name evidence="1" type="primary">ispE</name>
    <name type="ordered locus">AB57_0883</name>
</gene>
<feature type="chain" id="PRO_1000116920" description="4-diphosphocytidyl-2-C-methyl-D-erythritol kinase">
    <location>
        <begin position="1"/>
        <end position="277"/>
    </location>
</feature>
<feature type="active site" evidence="1">
    <location>
        <position position="9"/>
    </location>
</feature>
<feature type="active site" evidence="1">
    <location>
        <position position="133"/>
    </location>
</feature>
<feature type="binding site" evidence="1">
    <location>
        <begin position="91"/>
        <end position="101"/>
    </location>
    <ligand>
        <name>ATP</name>
        <dbReference type="ChEBI" id="CHEBI:30616"/>
    </ligand>
</feature>
<organism>
    <name type="scientific">Acinetobacter baumannii (strain AB0057)</name>
    <dbReference type="NCBI Taxonomy" id="480119"/>
    <lineage>
        <taxon>Bacteria</taxon>
        <taxon>Pseudomonadati</taxon>
        <taxon>Pseudomonadota</taxon>
        <taxon>Gammaproteobacteria</taxon>
        <taxon>Moraxellales</taxon>
        <taxon>Moraxellaceae</taxon>
        <taxon>Acinetobacter</taxon>
        <taxon>Acinetobacter calcoaceticus/baumannii complex</taxon>
    </lineage>
</organism>
<reference key="1">
    <citation type="journal article" date="2008" name="J. Bacteriol.">
        <title>Comparative genome sequence analysis of multidrug-resistant Acinetobacter baumannii.</title>
        <authorList>
            <person name="Adams M.D."/>
            <person name="Goglin K."/>
            <person name="Molyneaux N."/>
            <person name="Hujer K.M."/>
            <person name="Lavender H."/>
            <person name="Jamison J.J."/>
            <person name="MacDonald I.J."/>
            <person name="Martin K.M."/>
            <person name="Russo T."/>
            <person name="Campagnari A.A."/>
            <person name="Hujer A.M."/>
            <person name="Bonomo R.A."/>
            <person name="Gill S.R."/>
        </authorList>
    </citation>
    <scope>NUCLEOTIDE SEQUENCE [LARGE SCALE GENOMIC DNA]</scope>
    <source>
        <strain>AB0057</strain>
    </source>
</reference>
<proteinExistence type="inferred from homology"/>
<evidence type="ECO:0000255" key="1">
    <source>
        <dbReference type="HAMAP-Rule" id="MF_00061"/>
    </source>
</evidence>
<comment type="function">
    <text evidence="1">Catalyzes the phosphorylation of the position 2 hydroxy group of 4-diphosphocytidyl-2C-methyl-D-erythritol.</text>
</comment>
<comment type="catalytic activity">
    <reaction evidence="1">
        <text>4-CDP-2-C-methyl-D-erythritol + ATP = 4-CDP-2-C-methyl-D-erythritol 2-phosphate + ADP + H(+)</text>
        <dbReference type="Rhea" id="RHEA:18437"/>
        <dbReference type="ChEBI" id="CHEBI:15378"/>
        <dbReference type="ChEBI" id="CHEBI:30616"/>
        <dbReference type="ChEBI" id="CHEBI:57823"/>
        <dbReference type="ChEBI" id="CHEBI:57919"/>
        <dbReference type="ChEBI" id="CHEBI:456216"/>
        <dbReference type="EC" id="2.7.1.148"/>
    </reaction>
</comment>
<comment type="pathway">
    <text evidence="1">Isoprenoid biosynthesis; isopentenyl diphosphate biosynthesis via DXP pathway; isopentenyl diphosphate from 1-deoxy-D-xylulose 5-phosphate: step 3/6.</text>
</comment>
<comment type="similarity">
    <text evidence="1">Belongs to the GHMP kinase family. IspE subfamily.</text>
</comment>
<name>ISPE_ACIB5</name>
<protein>
    <recommendedName>
        <fullName evidence="1">4-diphosphocytidyl-2-C-methyl-D-erythritol kinase</fullName>
        <shortName evidence="1">CMK</shortName>
        <ecNumber evidence="1">2.7.1.148</ecNumber>
    </recommendedName>
    <alternativeName>
        <fullName evidence="1">4-(cytidine-5'-diphospho)-2-C-methyl-D-erythritol kinase</fullName>
    </alternativeName>
</protein>
<keyword id="KW-0067">ATP-binding</keyword>
<keyword id="KW-0414">Isoprene biosynthesis</keyword>
<keyword id="KW-0418">Kinase</keyword>
<keyword id="KW-0547">Nucleotide-binding</keyword>
<keyword id="KW-0808">Transferase</keyword>
<accession>B7I7P3</accession>